<protein>
    <recommendedName>
        <fullName>BTB/POZ domain-containing protein 10</fullName>
    </recommendedName>
    <alternativeName>
        <fullName evidence="6">Glucose metabolism-related protein 1</fullName>
    </alternativeName>
</protein>
<organism>
    <name type="scientific">Mus musculus</name>
    <name type="common">Mouse</name>
    <dbReference type="NCBI Taxonomy" id="10090"/>
    <lineage>
        <taxon>Eukaryota</taxon>
        <taxon>Metazoa</taxon>
        <taxon>Chordata</taxon>
        <taxon>Craniata</taxon>
        <taxon>Vertebrata</taxon>
        <taxon>Euteleostomi</taxon>
        <taxon>Mammalia</taxon>
        <taxon>Eutheria</taxon>
        <taxon>Euarchontoglires</taxon>
        <taxon>Glires</taxon>
        <taxon>Rodentia</taxon>
        <taxon>Myomorpha</taxon>
        <taxon>Muroidea</taxon>
        <taxon>Muridae</taxon>
        <taxon>Murinae</taxon>
        <taxon>Mus</taxon>
        <taxon>Mus</taxon>
    </lineage>
</organism>
<feature type="chain" id="PRO_0000228986" description="BTB/POZ domain-containing protein 10">
    <location>
        <begin position="1"/>
        <end position="475"/>
    </location>
</feature>
<feature type="domain" description="BTB">
    <location>
        <begin position="167"/>
        <end position="241"/>
    </location>
</feature>
<feature type="region of interest" description="Disordered" evidence="2">
    <location>
        <begin position="1"/>
        <end position="144"/>
    </location>
</feature>
<feature type="region of interest" description="Interaction with AKT family members" evidence="3">
    <location>
        <begin position="146"/>
        <end position="475"/>
    </location>
</feature>
<feature type="region of interest" description="Disordered" evidence="2">
    <location>
        <begin position="451"/>
        <end position="475"/>
    </location>
</feature>
<feature type="compositionally biased region" description="Basic residues" evidence="2">
    <location>
        <begin position="22"/>
        <end position="31"/>
    </location>
</feature>
<feature type="compositionally biased region" description="Basic and acidic residues" evidence="2">
    <location>
        <begin position="57"/>
        <end position="80"/>
    </location>
</feature>
<feature type="compositionally biased region" description="Polar residues" evidence="2">
    <location>
        <begin position="81"/>
        <end position="94"/>
    </location>
</feature>
<feature type="compositionally biased region" description="Basic and acidic residues" evidence="2">
    <location>
        <begin position="97"/>
        <end position="107"/>
    </location>
</feature>
<feature type="compositionally biased region" description="Low complexity" evidence="2">
    <location>
        <begin position="108"/>
        <end position="144"/>
    </location>
</feature>
<sequence>MAGRPHPYDSNSSDPENWDRKLHSRPRKLYKHSSSASRVAKGGVDHTKMSLHGASGGHERSRDRRRSSDRSRDSSHERAESQLTPCIRNVTSPTRQHHIEREKDHSSSRPSSPRPQRASPNGSMSSAGNSSRNSSQSSSDGSCKTSGEMVFVYENAKEGARNVRTSERVTLIVDNTRFVVDPSIFTAQPNTMLGRMFGSGREHNFTRPNEKGEYEVAEGIGSTVFRAILDYYKTGIIRCPDGISIPELREACDYLCISFEYSTIKCRDLSALMHELSNDGARRQFEFYLEEMILPLMVASAQSGERECHIVVLTDDDVVDWDEEYPPQMGEEYSQIIYSTKLYRFFKYIENRDVAKSVLKERGLKKIRLGIEGYPTYKEKVKKRPGGRPEVIYNYVQRPFIRMSWEKEEGKSRHVDFQCVKSKSITNLAAAAADIPQDQLVVMHPTPQVDELDILPSHPASGNNDLDPDAQNPML</sequence>
<dbReference type="EMBL" id="BC050781">
    <property type="protein sequence ID" value="AAH50781.1"/>
    <property type="molecule type" value="mRNA"/>
</dbReference>
<dbReference type="CCDS" id="CCDS21755.1"/>
<dbReference type="RefSeq" id="NP_598461.1">
    <property type="nucleotide sequence ID" value="NM_133700.3"/>
</dbReference>
<dbReference type="RefSeq" id="XP_006508223.1">
    <property type="nucleotide sequence ID" value="XM_006508160.3"/>
</dbReference>
<dbReference type="RefSeq" id="XP_011240192.1">
    <property type="nucleotide sequence ID" value="XM_011241890.3"/>
</dbReference>
<dbReference type="SMR" id="Q80X66"/>
<dbReference type="BioGRID" id="213065">
    <property type="interactions" value="7"/>
</dbReference>
<dbReference type="FunCoup" id="Q80X66">
    <property type="interactions" value="5027"/>
</dbReference>
<dbReference type="IntAct" id="Q80X66">
    <property type="interactions" value="2"/>
</dbReference>
<dbReference type="MINT" id="Q80X66"/>
<dbReference type="STRING" id="10090.ENSMUSP00000048530"/>
<dbReference type="iPTMnet" id="Q80X66"/>
<dbReference type="PhosphoSitePlus" id="Q80X66"/>
<dbReference type="PaxDb" id="10090-ENSMUSP00000048530"/>
<dbReference type="ProteomicsDB" id="273777"/>
<dbReference type="Antibodypedia" id="24598">
    <property type="antibodies" value="205 antibodies from 21 providers"/>
</dbReference>
<dbReference type="DNASU" id="68815"/>
<dbReference type="Ensembl" id="ENSMUST00000047091.14">
    <property type="protein sequence ID" value="ENSMUSP00000048530.8"/>
    <property type="gene ID" value="ENSMUSG00000038187.15"/>
</dbReference>
<dbReference type="GeneID" id="68815"/>
<dbReference type="KEGG" id="mmu:68815"/>
<dbReference type="UCSC" id="uc009jhl.1">
    <property type="organism name" value="mouse"/>
</dbReference>
<dbReference type="AGR" id="MGI:1916065"/>
<dbReference type="CTD" id="84280"/>
<dbReference type="MGI" id="MGI:1916065">
    <property type="gene designation" value="Btbd10"/>
</dbReference>
<dbReference type="VEuPathDB" id="HostDB:ENSMUSG00000038187"/>
<dbReference type="eggNOG" id="KOG3840">
    <property type="taxonomic scope" value="Eukaryota"/>
</dbReference>
<dbReference type="GeneTree" id="ENSGT00390000007975"/>
<dbReference type="InParanoid" id="Q80X66"/>
<dbReference type="OMA" id="PLANEPH"/>
<dbReference type="OrthoDB" id="10034757at2759"/>
<dbReference type="PhylomeDB" id="Q80X66"/>
<dbReference type="TreeFam" id="TF314369"/>
<dbReference type="BioGRID-ORCS" id="68815">
    <property type="hits" value="1 hit in 78 CRISPR screens"/>
</dbReference>
<dbReference type="ChiTaRS" id="Btbd10">
    <property type="organism name" value="mouse"/>
</dbReference>
<dbReference type="PRO" id="PR:Q80X66"/>
<dbReference type="Proteomes" id="UP000000589">
    <property type="component" value="Chromosome 7"/>
</dbReference>
<dbReference type="RNAct" id="Q80X66">
    <property type="molecule type" value="protein"/>
</dbReference>
<dbReference type="Bgee" id="ENSMUSG00000038187">
    <property type="expression patterns" value="Expressed in primary oocyte and 246 other cell types or tissues"/>
</dbReference>
<dbReference type="ExpressionAtlas" id="Q80X66">
    <property type="expression patterns" value="baseline and differential"/>
</dbReference>
<dbReference type="GO" id="GO:0005737">
    <property type="term" value="C:cytoplasm"/>
    <property type="evidence" value="ECO:0000314"/>
    <property type="project" value="UniProtKB"/>
</dbReference>
<dbReference type="GO" id="GO:0001650">
    <property type="term" value="C:fibrillar center"/>
    <property type="evidence" value="ECO:0007669"/>
    <property type="project" value="Ensembl"/>
</dbReference>
<dbReference type="GO" id="GO:0005654">
    <property type="term" value="C:nucleoplasm"/>
    <property type="evidence" value="ECO:0007669"/>
    <property type="project" value="Ensembl"/>
</dbReference>
<dbReference type="GO" id="GO:0051897">
    <property type="term" value="P:positive regulation of phosphatidylinositol 3-kinase/protein kinase B signal transduction"/>
    <property type="evidence" value="ECO:0000314"/>
    <property type="project" value="UniProtKB"/>
</dbReference>
<dbReference type="CDD" id="cd18385">
    <property type="entry name" value="BTB_POZ_BTBD10_GMRP1"/>
    <property type="match status" value="1"/>
</dbReference>
<dbReference type="FunFam" id="3.30.710.10:FF:000017">
    <property type="entry name" value="BTB/POZ domain-containing protein 10 isoform X1"/>
    <property type="match status" value="1"/>
</dbReference>
<dbReference type="Gene3D" id="3.30.710.10">
    <property type="entry name" value="Potassium Channel Kv1.1, Chain A"/>
    <property type="match status" value="1"/>
</dbReference>
<dbReference type="InterPro" id="IPR000210">
    <property type="entry name" value="BTB/POZ_dom"/>
</dbReference>
<dbReference type="InterPro" id="IPR039886">
    <property type="entry name" value="BTBD10/KCTD20"/>
</dbReference>
<dbReference type="InterPro" id="IPR039885">
    <property type="entry name" value="BTBD10/KCTD20_BTB/POZ"/>
</dbReference>
<dbReference type="InterPro" id="IPR011333">
    <property type="entry name" value="SKP1/BTB/POZ_sf"/>
</dbReference>
<dbReference type="PANTHER" id="PTHR21637">
    <property type="entry name" value="BTB/POZ DOMAIN-CONTAINING PROTEIN 10-RELATED"/>
    <property type="match status" value="1"/>
</dbReference>
<dbReference type="PANTHER" id="PTHR21637:SF5">
    <property type="entry name" value="BTB_POZ DOMAIN-CONTAINING PROTEIN 10"/>
    <property type="match status" value="1"/>
</dbReference>
<dbReference type="Pfam" id="PF16017">
    <property type="entry name" value="BTB_3"/>
    <property type="match status" value="1"/>
</dbReference>
<dbReference type="SMART" id="SM00225">
    <property type="entry name" value="BTB"/>
    <property type="match status" value="1"/>
</dbReference>
<dbReference type="SUPFAM" id="SSF54695">
    <property type="entry name" value="POZ domain"/>
    <property type="match status" value="1"/>
</dbReference>
<gene>
    <name type="primary">Btbd10</name>
    <name evidence="6" type="synonym">Gmrp1</name>
</gene>
<name>BTBDA_MOUSE</name>
<proteinExistence type="evidence at protein level"/>
<reference key="1">
    <citation type="journal article" date="2004" name="Genome Res.">
        <title>The status, quality, and expansion of the NIH full-length cDNA project: the Mammalian Gene Collection (MGC).</title>
        <authorList>
            <consortium name="The MGC Project Team"/>
        </authorList>
    </citation>
    <scope>NUCLEOTIDE SEQUENCE [LARGE SCALE MRNA]</scope>
    <source>
        <tissue>Brain</tissue>
    </source>
</reference>
<reference key="2">
    <citation type="submission" date="2009-01" db="UniProtKB">
        <authorList>
            <person name="Lubec G."/>
            <person name="Sunyer B."/>
            <person name="Chen W.-Q."/>
        </authorList>
    </citation>
    <scope>PROTEIN SEQUENCE OF 363-368</scope>
    <scope>IDENTIFICATION BY MASS SPECTROMETRY</scope>
    <source>
        <strain>OF1</strain>
        <tissue>Hippocampus</tissue>
    </source>
</reference>
<reference key="3">
    <citation type="journal article" date="2008" name="Cell. Signal.">
        <title>A novel Akt/PKB-interacting protein promotes cell adhesion and inhibits familial amyotrophic lateral sclerosis-linked mutant SOD1-induced neuronal death via inhibition of PP2A-mediated dephosphorylation of Akt/PKB.</title>
        <authorList>
            <person name="Nawa M."/>
            <person name="Kanekura K."/>
            <person name="Hashimoto Y."/>
            <person name="Aiso S."/>
            <person name="Matsuoka M."/>
        </authorList>
    </citation>
    <scope>TISSUE SPECIFICITY</scope>
    <scope>INTERACTION WITH AKT1; AKT2; AKT3; PPP2CA AND PPP1CA</scope>
    <scope>SUBCELLULAR LOCATION</scope>
    <scope>FUNCTION</scope>
</reference>
<reference key="4">
    <citation type="journal article" date="2011" name="Diabetologia">
        <title>Glucose metabolism-related protein 1 (GMRP1) regulates pancreatic beta cell proliferation and apoptosis via activation of Akt signalling pathway in rats and mice.</title>
        <authorList>
            <person name="Wang X."/>
            <person name="Liu Y."/>
            <person name="Yang Z."/>
            <person name="Zhang Z."/>
            <person name="Zhou W."/>
            <person name="Ye Z."/>
            <person name="Zhang W."/>
            <person name="Zhang S."/>
            <person name="Yang Z."/>
            <person name="Feng X."/>
            <person name="Chen F."/>
            <person name="Hu R."/>
        </authorList>
    </citation>
    <scope>FUNCTION</scope>
</reference>
<reference key="5">
    <citation type="journal article" date="2013" name="BMC Biochem.">
        <title>KCTD20, a relative of BTBD10, is a positive regulator of Akt.</title>
        <authorList>
            <person name="Nawa M."/>
            <person name="Matsuoka M."/>
        </authorList>
    </citation>
    <scope>SUBCELLULAR LOCATION</scope>
</reference>
<evidence type="ECO:0000250" key="1">
    <source>
        <dbReference type="UniProtKB" id="Q9BSF8"/>
    </source>
</evidence>
<evidence type="ECO:0000256" key="2">
    <source>
        <dbReference type="SAM" id="MobiDB-lite"/>
    </source>
</evidence>
<evidence type="ECO:0000269" key="3">
    <source>
    </source>
</evidence>
<evidence type="ECO:0000269" key="4">
    <source>
    </source>
</evidence>
<evidence type="ECO:0000269" key="5">
    <source>
    </source>
</evidence>
<evidence type="ECO:0000303" key="6">
    <source>
    </source>
</evidence>
<comment type="function">
    <text evidence="3 4">Plays a major role as an activator of AKT family members by inhibiting PPP2CA-mediated dephosphorylation, thereby keeping AKTs activated. Plays a role in preventing motor neuronal death and in accelerating the growth of pancreatic beta cells.</text>
</comment>
<comment type="subunit">
    <text evidence="3">Interacts (via C-terminal 330-amino-acid region) with AKT1; AKT2 and AKT3 (PubMed:18160256). Interacts with PPP2CA and PPP1CA (PubMed:18160256).</text>
</comment>
<comment type="subcellular location">
    <subcellularLocation>
        <location evidence="1">Nucleus</location>
    </subcellularLocation>
    <subcellularLocation>
        <location evidence="3">Cytoplasm</location>
    </subcellularLocation>
    <text evidence="5">Colocalizes with KCTD20 in filamentous structures.</text>
</comment>
<comment type="tissue specificity">
    <text evidence="3">Ubiquitously expressed (at protein level).</text>
</comment>
<keyword id="KW-0963">Cytoplasm</keyword>
<keyword id="KW-0903">Direct protein sequencing</keyword>
<keyword id="KW-0539">Nucleus</keyword>
<keyword id="KW-1185">Reference proteome</keyword>
<accession>Q80X66</accession>